<protein>
    <recommendedName>
        <fullName>Serine protease inhibitor 4</fullName>
        <shortName>PI-4</shortName>
    </recommendedName>
</protein>
<comment type="function">
    <text evidence="1">Inhibitor of serine protease. May protect the plant by inhibiting proteases of invading organisms (By similarity).</text>
</comment>
<comment type="subcellular location">
    <subcellularLocation>
        <location evidence="1">Vacuole</location>
    </subcellularLocation>
</comment>
<comment type="similarity">
    <text evidence="2">Belongs to the protease inhibitor I3 (leguminous Kunitz-type inhibitor) family.</text>
</comment>
<evidence type="ECO:0000250" key="1"/>
<evidence type="ECO:0000305" key="2"/>
<keyword id="KW-1015">Disulfide bond</keyword>
<keyword id="KW-0646">Protease inhibitor</keyword>
<keyword id="KW-1185">Reference proteome</keyword>
<keyword id="KW-0722">Serine protease inhibitor</keyword>
<keyword id="KW-0926">Vacuole</keyword>
<feature type="chain" id="PRO_0000016903" description="Serine protease inhibitor 4">
    <location>
        <begin position="1" status="less than"/>
        <end position="103"/>
    </location>
</feature>
<feature type="site" description="Reactive bond for chymotrypsin" evidence="1">
    <location>
        <begin position="25"/>
        <end position="26"/>
    </location>
</feature>
<feature type="disulfide bond" evidence="1">
    <location>
        <begin position="56"/>
        <end position="73"/>
    </location>
</feature>
<feature type="non-terminal residue">
    <location>
        <position position="1"/>
    </location>
</feature>
<dbReference type="PIR" id="S24187">
    <property type="entry name" value="S24187"/>
</dbReference>
<dbReference type="SMR" id="P58517"/>
<dbReference type="STRING" id="4113.P58517"/>
<dbReference type="InParanoid" id="P58517"/>
<dbReference type="Proteomes" id="UP000011115">
    <property type="component" value="Unassembled WGS sequence"/>
</dbReference>
<dbReference type="ExpressionAtlas" id="P58517">
    <property type="expression patterns" value="baseline"/>
</dbReference>
<dbReference type="GO" id="GO:0005773">
    <property type="term" value="C:vacuole"/>
    <property type="evidence" value="ECO:0007669"/>
    <property type="project" value="UniProtKB-SubCell"/>
</dbReference>
<dbReference type="GO" id="GO:0004867">
    <property type="term" value="F:serine-type endopeptidase inhibitor activity"/>
    <property type="evidence" value="ECO:0007669"/>
    <property type="project" value="UniProtKB-KW"/>
</dbReference>
<dbReference type="Gene3D" id="2.80.10.50">
    <property type="match status" value="1"/>
</dbReference>
<dbReference type="InterPro" id="IPR011065">
    <property type="entry name" value="Kunitz_inhibitor_STI-like_sf"/>
</dbReference>
<dbReference type="InterPro" id="IPR002160">
    <property type="entry name" value="Prot_inh_Kunz-lg"/>
</dbReference>
<dbReference type="PANTHER" id="PTHR33107">
    <property type="entry name" value="KUNITZ TRYPSIN INHIBITOR 2"/>
    <property type="match status" value="1"/>
</dbReference>
<dbReference type="PANTHER" id="PTHR33107:SF38">
    <property type="entry name" value="SERINE PROTEASE INHIBITOR 5"/>
    <property type="match status" value="1"/>
</dbReference>
<dbReference type="Pfam" id="PF00197">
    <property type="entry name" value="Kunitz_legume"/>
    <property type="match status" value="1"/>
</dbReference>
<dbReference type="PRINTS" id="PR00291">
    <property type="entry name" value="KUNITZINHBTR"/>
</dbReference>
<dbReference type="SMART" id="SM00452">
    <property type="entry name" value="STI"/>
    <property type="match status" value="1"/>
</dbReference>
<dbReference type="SUPFAM" id="SSF50386">
    <property type="entry name" value="STI-like"/>
    <property type="match status" value="1"/>
</dbReference>
<reference key="1">
    <citation type="journal article" date="1992" name="Biol. Chem. Hoppe-Seyler">
        <title>Characterization of aspartic proteinase inhibitors from potato at the gene, cDNA and protein levels.</title>
        <authorList>
            <person name="Strukelj B."/>
            <person name="Pungercar J."/>
            <person name="Mesko P."/>
            <person name="Barlic-Maganja D."/>
            <person name="Gubensek F."/>
            <person name="Kregar I."/>
            <person name="Turk V."/>
        </authorList>
    </citation>
    <scope>NUCLEOTIDE SEQUENCE</scope>
    <source>
        <strain>cv. Pentland squire</strain>
        <tissue>Tuber</tissue>
    </source>
</reference>
<name>SPI4_SOLTU</name>
<accession>P58517</accession>
<sequence>ISTSKLCVSYTIWKVGDYDASLGTMLLETGGTIGQADSSWFKIVQSSQFGYNLLYCPVTSTMSCPFSLDDQFCLKVGVVHQNGKRRLALVNGNPLECLFKQVQ</sequence>
<proteinExistence type="inferred from homology"/>
<organism>
    <name type="scientific">Solanum tuberosum</name>
    <name type="common">Potato</name>
    <dbReference type="NCBI Taxonomy" id="4113"/>
    <lineage>
        <taxon>Eukaryota</taxon>
        <taxon>Viridiplantae</taxon>
        <taxon>Streptophyta</taxon>
        <taxon>Embryophyta</taxon>
        <taxon>Tracheophyta</taxon>
        <taxon>Spermatophyta</taxon>
        <taxon>Magnoliopsida</taxon>
        <taxon>eudicotyledons</taxon>
        <taxon>Gunneridae</taxon>
        <taxon>Pentapetalae</taxon>
        <taxon>asterids</taxon>
        <taxon>lamiids</taxon>
        <taxon>Solanales</taxon>
        <taxon>Solanaceae</taxon>
        <taxon>Solanoideae</taxon>
        <taxon>Solaneae</taxon>
        <taxon>Solanum</taxon>
    </lineage>
</organism>